<organism>
    <name type="scientific">Haloarcula marismortui (strain ATCC 43049 / DSM 3752 / JCM 8966 / VKM B-1809)</name>
    <name type="common">Halobacterium marismortui</name>
    <dbReference type="NCBI Taxonomy" id="272569"/>
    <lineage>
        <taxon>Archaea</taxon>
        <taxon>Methanobacteriati</taxon>
        <taxon>Methanobacteriota</taxon>
        <taxon>Stenosarchaea group</taxon>
        <taxon>Halobacteria</taxon>
        <taxon>Halobacteriales</taxon>
        <taxon>Haloarculaceae</taxon>
        <taxon>Haloarcula</taxon>
    </lineage>
</organism>
<keyword id="KW-0030">Aminoacyl-tRNA synthetase</keyword>
<keyword id="KW-0067">ATP-binding</keyword>
<keyword id="KW-0963">Cytoplasm</keyword>
<keyword id="KW-0436">Ligase</keyword>
<keyword id="KW-0547">Nucleotide-binding</keyword>
<keyword id="KW-0648">Protein biosynthesis</keyword>
<keyword id="KW-1185">Reference proteome</keyword>
<proteinExistence type="inferred from homology"/>
<dbReference type="EC" id="6.1.1.17" evidence="1"/>
<dbReference type="EMBL" id="AY596297">
    <property type="protein sequence ID" value="AAV45163.1"/>
    <property type="molecule type" value="Genomic_DNA"/>
</dbReference>
<dbReference type="RefSeq" id="WP_011222809.1">
    <property type="nucleotide sequence ID" value="NC_006396.1"/>
</dbReference>
<dbReference type="SMR" id="Q5V5N9"/>
<dbReference type="STRING" id="272569.rrnAC0085"/>
<dbReference type="PaxDb" id="272569-rrnAC0085"/>
<dbReference type="EnsemblBacteria" id="AAV45163">
    <property type="protein sequence ID" value="AAV45163"/>
    <property type="gene ID" value="rrnAC0085"/>
</dbReference>
<dbReference type="GeneID" id="40154398"/>
<dbReference type="KEGG" id="hma:rrnAC0085"/>
<dbReference type="PATRIC" id="fig|272569.17.peg.891"/>
<dbReference type="eggNOG" id="arCOG04302">
    <property type="taxonomic scope" value="Archaea"/>
</dbReference>
<dbReference type="HOGENOM" id="CLU_001882_1_3_2"/>
<dbReference type="Proteomes" id="UP000001169">
    <property type="component" value="Chromosome I"/>
</dbReference>
<dbReference type="GO" id="GO:0005829">
    <property type="term" value="C:cytosol"/>
    <property type="evidence" value="ECO:0007669"/>
    <property type="project" value="TreeGrafter"/>
</dbReference>
<dbReference type="GO" id="GO:0005524">
    <property type="term" value="F:ATP binding"/>
    <property type="evidence" value="ECO:0007669"/>
    <property type="project" value="UniProtKB-UniRule"/>
</dbReference>
<dbReference type="GO" id="GO:0004818">
    <property type="term" value="F:glutamate-tRNA ligase activity"/>
    <property type="evidence" value="ECO:0007669"/>
    <property type="project" value="UniProtKB-UniRule"/>
</dbReference>
<dbReference type="GO" id="GO:0008270">
    <property type="term" value="F:zinc ion binding"/>
    <property type="evidence" value="ECO:0007669"/>
    <property type="project" value="InterPro"/>
</dbReference>
<dbReference type="GO" id="GO:0043604">
    <property type="term" value="P:amide biosynthetic process"/>
    <property type="evidence" value="ECO:0007669"/>
    <property type="project" value="TreeGrafter"/>
</dbReference>
<dbReference type="GO" id="GO:0006424">
    <property type="term" value="P:glutamyl-tRNA aminoacylation"/>
    <property type="evidence" value="ECO:0007669"/>
    <property type="project" value="UniProtKB-UniRule"/>
</dbReference>
<dbReference type="Gene3D" id="2.40.240.100">
    <property type="match status" value="1"/>
</dbReference>
<dbReference type="Gene3D" id="3.40.50.620">
    <property type="entry name" value="HUPs"/>
    <property type="match status" value="1"/>
</dbReference>
<dbReference type="Gene3D" id="2.40.240.10">
    <property type="entry name" value="Ribosomal Protein L25, Chain P"/>
    <property type="match status" value="1"/>
</dbReference>
<dbReference type="HAMAP" id="MF_02076">
    <property type="entry name" value="Glu_tRNA_synth_type2"/>
    <property type="match status" value="1"/>
</dbReference>
<dbReference type="InterPro" id="IPR050132">
    <property type="entry name" value="Gln/Glu-tRNA_Ligase"/>
</dbReference>
<dbReference type="InterPro" id="IPR004526">
    <property type="entry name" value="Glu-tRNA-synth_arc/euk"/>
</dbReference>
<dbReference type="InterPro" id="IPR000924">
    <property type="entry name" value="Glu/Gln-tRNA-synth"/>
</dbReference>
<dbReference type="InterPro" id="IPR020058">
    <property type="entry name" value="Glu/Gln-tRNA-synth_Ib_cat-dom"/>
</dbReference>
<dbReference type="InterPro" id="IPR020059">
    <property type="entry name" value="Glu/Gln-tRNA-synth_Ib_codon-bd"/>
</dbReference>
<dbReference type="InterPro" id="IPR020056">
    <property type="entry name" value="Rbsml_bL25/Gln-tRNA_synth_N"/>
</dbReference>
<dbReference type="InterPro" id="IPR011035">
    <property type="entry name" value="Ribosomal_bL25/Gln-tRNA_synth"/>
</dbReference>
<dbReference type="InterPro" id="IPR014729">
    <property type="entry name" value="Rossmann-like_a/b/a_fold"/>
</dbReference>
<dbReference type="InterPro" id="IPR049437">
    <property type="entry name" value="tRNA-synt_1c_C2"/>
</dbReference>
<dbReference type="InterPro" id="IPR007527">
    <property type="entry name" value="Znf_SWIM"/>
</dbReference>
<dbReference type="NCBIfam" id="TIGR00463">
    <property type="entry name" value="gltX_arch"/>
    <property type="match status" value="1"/>
</dbReference>
<dbReference type="NCBIfam" id="NF003169">
    <property type="entry name" value="PRK04156.1"/>
    <property type="match status" value="1"/>
</dbReference>
<dbReference type="PANTHER" id="PTHR43097:SF5">
    <property type="entry name" value="GLUTAMATE--TRNA LIGASE"/>
    <property type="match status" value="1"/>
</dbReference>
<dbReference type="PANTHER" id="PTHR43097">
    <property type="entry name" value="GLUTAMINE-TRNA LIGASE"/>
    <property type="match status" value="1"/>
</dbReference>
<dbReference type="Pfam" id="PF00749">
    <property type="entry name" value="tRNA-synt_1c"/>
    <property type="match status" value="1"/>
</dbReference>
<dbReference type="Pfam" id="PF03950">
    <property type="entry name" value="tRNA-synt_1c_C"/>
    <property type="match status" value="1"/>
</dbReference>
<dbReference type="Pfam" id="PF20974">
    <property type="entry name" value="tRNA-synt_1c_C2"/>
    <property type="match status" value="1"/>
</dbReference>
<dbReference type="PRINTS" id="PR00987">
    <property type="entry name" value="TRNASYNTHGLU"/>
</dbReference>
<dbReference type="SUPFAM" id="SSF52374">
    <property type="entry name" value="Nucleotidylyl transferase"/>
    <property type="match status" value="1"/>
</dbReference>
<dbReference type="SUPFAM" id="SSF50715">
    <property type="entry name" value="Ribosomal protein L25-like"/>
    <property type="match status" value="1"/>
</dbReference>
<evidence type="ECO:0000255" key="1">
    <source>
        <dbReference type="HAMAP-Rule" id="MF_02076"/>
    </source>
</evidence>
<comment type="function">
    <text evidence="1">Catalyzes the attachment of glutamate to tRNA(Glu) in a two-step reaction: glutamate is first activated by ATP to form Glu-AMP and then transferred to the acceptor end of tRNA(Glu).</text>
</comment>
<comment type="catalytic activity">
    <reaction evidence="1">
        <text>tRNA(Glu) + L-glutamate + ATP = L-glutamyl-tRNA(Glu) + AMP + diphosphate</text>
        <dbReference type="Rhea" id="RHEA:23540"/>
        <dbReference type="Rhea" id="RHEA-COMP:9663"/>
        <dbReference type="Rhea" id="RHEA-COMP:9680"/>
        <dbReference type="ChEBI" id="CHEBI:29985"/>
        <dbReference type="ChEBI" id="CHEBI:30616"/>
        <dbReference type="ChEBI" id="CHEBI:33019"/>
        <dbReference type="ChEBI" id="CHEBI:78442"/>
        <dbReference type="ChEBI" id="CHEBI:78520"/>
        <dbReference type="ChEBI" id="CHEBI:456215"/>
        <dbReference type="EC" id="6.1.1.17"/>
    </reaction>
</comment>
<comment type="subcellular location">
    <subcellularLocation>
        <location evidence="1">Cytoplasm</location>
    </subcellularLocation>
</comment>
<comment type="similarity">
    <text evidence="1">Belongs to the class-I aminoacyl-tRNA synthetase family. Glutamate--tRNA ligase type 2 subfamily.</text>
</comment>
<gene>
    <name evidence="1" type="primary">gltX</name>
    <name type="ordered locus">rrnAC0085</name>
</gene>
<sequence>MDDELRDRITEAAETNALLNAVKHDSEAQVGAIMGPLMGENPEFREYGDEIPGVIAPVVERVNGMDAEERRERLAELAPEKLEELEAEDEGEDHPLPDLPSAEEYDTVRMRVAPNPNGPWHIGHARMAAVVGTYKQRYDGEFICRFDDTDPETKRPDLDAYDAILDAIDYLGFEPDDVVNASDRVETYYEYARKLIDKGGAYTCSCPQGEFSDLKNNGEACPHRDKDAETTRSEFEAMVDGEYDSGEMVLRVRTDITHKNPALRDFVAFRMVDTPHPREAAEQYRCWPMLDFQSGLDDHLLGVTHIIRGIDLQDSAKRQQFVYDYFDWEYPEVIHWGHVQVDEYDVPLSTSSIAELIEDGELAGWDDPRAPTVASLERRGIRGEAVVDAMIQLGTSTSNVDLAMSSIYSNNRDLIDDDSDRAFFVRDSDDHGGLVERQIVGGPDAGEPPLHPDYEERGRREIPVTSGVVVEGDDLPDHGDRIWLKGYGCVRHTRDAFEYTGDDIDAVREEGVDVIHWAPADGPALRLRTMDGDVSGVAEPGLRNYDTDDVVQFERIGFARLDKVADDSDTESVAYFTHP</sequence>
<reference key="1">
    <citation type="journal article" date="2004" name="Genome Res.">
        <title>Genome sequence of Haloarcula marismortui: a halophilic archaeon from the Dead Sea.</title>
        <authorList>
            <person name="Baliga N.S."/>
            <person name="Bonneau R."/>
            <person name="Facciotti M.T."/>
            <person name="Pan M."/>
            <person name="Glusman G."/>
            <person name="Deutsch E.W."/>
            <person name="Shannon P."/>
            <person name="Chiu Y."/>
            <person name="Weng R.S."/>
            <person name="Gan R.R."/>
            <person name="Hung P."/>
            <person name="Date S.V."/>
            <person name="Marcotte E."/>
            <person name="Hood L."/>
            <person name="Ng W.V."/>
        </authorList>
    </citation>
    <scope>NUCLEOTIDE SEQUENCE [LARGE SCALE GENOMIC DNA]</scope>
    <source>
        <strain>ATCC 43049 / DSM 3752 / JCM 8966 / VKM B-1809</strain>
    </source>
</reference>
<name>SYE_HALMA</name>
<feature type="chain" id="PRO_0000119714" description="Glutamate--tRNA ligase">
    <location>
        <begin position="1"/>
        <end position="579"/>
    </location>
</feature>
<feature type="short sequence motif" description="'HIGH' region" evidence="1">
    <location>
        <begin position="114"/>
        <end position="124"/>
    </location>
</feature>
<protein>
    <recommendedName>
        <fullName evidence="1">Glutamate--tRNA ligase</fullName>
        <ecNumber evidence="1">6.1.1.17</ecNumber>
    </recommendedName>
    <alternativeName>
        <fullName evidence="1">Glutamyl-tRNA synthetase</fullName>
        <shortName evidence="1">GluRS</shortName>
    </alternativeName>
</protein>
<accession>Q5V5N9</accession>